<gene>
    <name evidence="7" type="primary">BPG2</name>
    <name evidence="9" type="ordered locus">At3g57180</name>
    <name evidence="10" type="ORF">F28O9.30</name>
</gene>
<organism>
    <name type="scientific">Arabidopsis thaliana</name>
    <name type="common">Mouse-ear cress</name>
    <dbReference type="NCBI Taxonomy" id="3702"/>
    <lineage>
        <taxon>Eukaryota</taxon>
        <taxon>Viridiplantae</taxon>
        <taxon>Streptophyta</taxon>
        <taxon>Embryophyta</taxon>
        <taxon>Tracheophyta</taxon>
        <taxon>Spermatophyta</taxon>
        <taxon>Magnoliopsida</taxon>
        <taxon>eudicotyledons</taxon>
        <taxon>Gunneridae</taxon>
        <taxon>Pentapetalae</taxon>
        <taxon>rosids</taxon>
        <taxon>malvids</taxon>
        <taxon>Brassicales</taxon>
        <taxon>Brassicaceae</taxon>
        <taxon>Camelineae</taxon>
        <taxon>Arabidopsis</taxon>
    </lineage>
</organism>
<keyword id="KW-1070">Brassinosteroid signaling pathway</keyword>
<keyword id="KW-0150">Chloroplast</keyword>
<keyword id="KW-0342">GTP-binding</keyword>
<keyword id="KW-0378">Hydrolase</keyword>
<keyword id="KW-0547">Nucleotide-binding</keyword>
<keyword id="KW-0934">Plastid</keyword>
<keyword id="KW-1185">Reference proteome</keyword>
<keyword id="KW-0694">RNA-binding</keyword>
<keyword id="KW-0698">rRNA processing</keyword>
<keyword id="KW-0699">rRNA-binding</keyword>
<keyword id="KW-0809">Transit peptide</keyword>
<accession>Q8W4I6</accession>
<accession>Q9M2M9</accession>
<name>BPG2_ARATH</name>
<reference key="1">
    <citation type="journal article" date="2000" name="Nature">
        <title>Sequence and analysis of chromosome 3 of the plant Arabidopsis thaliana.</title>
        <authorList>
            <person name="Salanoubat M."/>
            <person name="Lemcke K."/>
            <person name="Rieger M."/>
            <person name="Ansorge W."/>
            <person name="Unseld M."/>
            <person name="Fartmann B."/>
            <person name="Valle G."/>
            <person name="Bloecker H."/>
            <person name="Perez-Alonso M."/>
            <person name="Obermaier B."/>
            <person name="Delseny M."/>
            <person name="Boutry M."/>
            <person name="Grivell L.A."/>
            <person name="Mache R."/>
            <person name="Puigdomenech P."/>
            <person name="De Simone V."/>
            <person name="Choisne N."/>
            <person name="Artiguenave F."/>
            <person name="Robert C."/>
            <person name="Brottier P."/>
            <person name="Wincker P."/>
            <person name="Cattolico L."/>
            <person name="Weissenbach J."/>
            <person name="Saurin W."/>
            <person name="Quetier F."/>
            <person name="Schaefer M."/>
            <person name="Mueller-Auer S."/>
            <person name="Gabel C."/>
            <person name="Fuchs M."/>
            <person name="Benes V."/>
            <person name="Wurmbach E."/>
            <person name="Drzonek H."/>
            <person name="Erfle H."/>
            <person name="Jordan N."/>
            <person name="Bangert S."/>
            <person name="Wiedelmann R."/>
            <person name="Kranz H."/>
            <person name="Voss H."/>
            <person name="Holland R."/>
            <person name="Brandt P."/>
            <person name="Nyakatura G."/>
            <person name="Vezzi A."/>
            <person name="D'Angelo M."/>
            <person name="Pallavicini A."/>
            <person name="Toppo S."/>
            <person name="Simionati B."/>
            <person name="Conrad A."/>
            <person name="Hornischer K."/>
            <person name="Kauer G."/>
            <person name="Loehnert T.-H."/>
            <person name="Nordsiek G."/>
            <person name="Reichelt J."/>
            <person name="Scharfe M."/>
            <person name="Schoen O."/>
            <person name="Bargues M."/>
            <person name="Terol J."/>
            <person name="Climent J."/>
            <person name="Navarro P."/>
            <person name="Collado C."/>
            <person name="Perez-Perez A."/>
            <person name="Ottenwaelder B."/>
            <person name="Duchemin D."/>
            <person name="Cooke R."/>
            <person name="Laudie M."/>
            <person name="Berger-Llauro C."/>
            <person name="Purnelle B."/>
            <person name="Masuy D."/>
            <person name="de Haan M."/>
            <person name="Maarse A.C."/>
            <person name="Alcaraz J.-P."/>
            <person name="Cottet A."/>
            <person name="Casacuberta E."/>
            <person name="Monfort A."/>
            <person name="Argiriou A."/>
            <person name="Flores M."/>
            <person name="Liguori R."/>
            <person name="Vitale D."/>
            <person name="Mannhaupt G."/>
            <person name="Haase D."/>
            <person name="Schoof H."/>
            <person name="Rudd S."/>
            <person name="Zaccaria P."/>
            <person name="Mewes H.-W."/>
            <person name="Mayer K.F.X."/>
            <person name="Kaul S."/>
            <person name="Town C.D."/>
            <person name="Koo H.L."/>
            <person name="Tallon L.J."/>
            <person name="Jenkins J."/>
            <person name="Rooney T."/>
            <person name="Rizzo M."/>
            <person name="Walts A."/>
            <person name="Utterback T."/>
            <person name="Fujii C.Y."/>
            <person name="Shea T.P."/>
            <person name="Creasy T.H."/>
            <person name="Haas B."/>
            <person name="Maiti R."/>
            <person name="Wu D."/>
            <person name="Peterson J."/>
            <person name="Van Aken S."/>
            <person name="Pai G."/>
            <person name="Militscher J."/>
            <person name="Sellers P."/>
            <person name="Gill J.E."/>
            <person name="Feldblyum T.V."/>
            <person name="Preuss D."/>
            <person name="Lin X."/>
            <person name="Nierman W.C."/>
            <person name="Salzberg S.L."/>
            <person name="White O."/>
            <person name="Venter J.C."/>
            <person name="Fraser C.M."/>
            <person name="Kaneko T."/>
            <person name="Nakamura Y."/>
            <person name="Sato S."/>
            <person name="Kato T."/>
            <person name="Asamizu E."/>
            <person name="Sasamoto S."/>
            <person name="Kimura T."/>
            <person name="Idesawa K."/>
            <person name="Kawashima K."/>
            <person name="Kishida Y."/>
            <person name="Kiyokawa C."/>
            <person name="Kohara M."/>
            <person name="Matsumoto M."/>
            <person name="Matsuno A."/>
            <person name="Muraki A."/>
            <person name="Nakayama S."/>
            <person name="Nakazaki N."/>
            <person name="Shinpo S."/>
            <person name="Takeuchi C."/>
            <person name="Wada T."/>
            <person name="Watanabe A."/>
            <person name="Yamada M."/>
            <person name="Yasuda M."/>
            <person name="Tabata S."/>
        </authorList>
    </citation>
    <scope>NUCLEOTIDE SEQUENCE [LARGE SCALE GENOMIC DNA]</scope>
    <source>
        <strain>cv. Columbia</strain>
    </source>
</reference>
<reference key="2">
    <citation type="journal article" date="2017" name="Plant J.">
        <title>Araport11: a complete reannotation of the Arabidopsis thaliana reference genome.</title>
        <authorList>
            <person name="Cheng C.Y."/>
            <person name="Krishnakumar V."/>
            <person name="Chan A.P."/>
            <person name="Thibaud-Nissen F."/>
            <person name="Schobel S."/>
            <person name="Town C.D."/>
        </authorList>
    </citation>
    <scope>GENOME REANNOTATION</scope>
    <source>
        <strain>cv. Columbia</strain>
    </source>
</reference>
<reference key="3">
    <citation type="journal article" date="2003" name="Science">
        <title>Empirical analysis of transcriptional activity in the Arabidopsis genome.</title>
        <authorList>
            <person name="Yamada K."/>
            <person name="Lim J."/>
            <person name="Dale J.M."/>
            <person name="Chen H."/>
            <person name="Shinn P."/>
            <person name="Palm C.J."/>
            <person name="Southwick A.M."/>
            <person name="Wu H.C."/>
            <person name="Kim C.J."/>
            <person name="Nguyen M."/>
            <person name="Pham P.K."/>
            <person name="Cheuk R.F."/>
            <person name="Karlin-Newmann G."/>
            <person name="Liu S.X."/>
            <person name="Lam B."/>
            <person name="Sakano H."/>
            <person name="Wu T."/>
            <person name="Yu G."/>
            <person name="Miranda M."/>
            <person name="Quach H.L."/>
            <person name="Tripp M."/>
            <person name="Chang C.H."/>
            <person name="Lee J.M."/>
            <person name="Toriumi M.J."/>
            <person name="Chan M.M."/>
            <person name="Tang C.C."/>
            <person name="Onodera C.S."/>
            <person name="Deng J.M."/>
            <person name="Akiyama K."/>
            <person name="Ansari Y."/>
            <person name="Arakawa T."/>
            <person name="Banh J."/>
            <person name="Banno F."/>
            <person name="Bowser L."/>
            <person name="Brooks S.Y."/>
            <person name="Carninci P."/>
            <person name="Chao Q."/>
            <person name="Choy N."/>
            <person name="Enju A."/>
            <person name="Goldsmith A.D."/>
            <person name="Gurjal M."/>
            <person name="Hansen N.F."/>
            <person name="Hayashizaki Y."/>
            <person name="Johnson-Hopson C."/>
            <person name="Hsuan V.W."/>
            <person name="Iida K."/>
            <person name="Karnes M."/>
            <person name="Khan S."/>
            <person name="Koesema E."/>
            <person name="Ishida J."/>
            <person name="Jiang P.X."/>
            <person name="Jones T."/>
            <person name="Kawai J."/>
            <person name="Kamiya A."/>
            <person name="Meyers C."/>
            <person name="Nakajima M."/>
            <person name="Narusaka M."/>
            <person name="Seki M."/>
            <person name="Sakurai T."/>
            <person name="Satou M."/>
            <person name="Tamse R."/>
            <person name="Vaysberg M."/>
            <person name="Wallender E.K."/>
            <person name="Wong C."/>
            <person name="Yamamura Y."/>
            <person name="Yuan S."/>
            <person name="Shinozaki K."/>
            <person name="Davis R.W."/>
            <person name="Theologis A."/>
            <person name="Ecker J.R."/>
        </authorList>
    </citation>
    <scope>NUCLEOTIDE SEQUENCE [LARGE SCALE MRNA]</scope>
    <source>
        <strain>cv. Columbia</strain>
    </source>
</reference>
<reference key="4">
    <citation type="journal article" date="2010" name="Plant J.">
        <title>The chloroplast protein BPG2 functions in brassinosteroid-mediated post-transcriptional accumulation of chloroplast rRNA.</title>
        <authorList>
            <person name="Komatsu T."/>
            <person name="Kawaide H."/>
            <person name="Saito C."/>
            <person name="Yamagami A."/>
            <person name="Shimada S."/>
            <person name="Nakazawa M."/>
            <person name="Matsui M."/>
            <person name="Nakano A."/>
            <person name="Tsujimoto M."/>
            <person name="Natsume M."/>
            <person name="Abe H."/>
            <person name="Asami T."/>
            <person name="Nakano T."/>
        </authorList>
    </citation>
    <scope>FUNCTION</scope>
    <scope>DISRUPTION PHENOTYPE</scope>
    <scope>INDUCTION BY LIGHT AND BRASSINAZOLE</scope>
    <scope>MUTAGENESIS OF 98-CYS--GLY-102; 242-CYS--CYS-245; 335-LYS--ASP-337; 404-GLY-LYS-405; 431-THR-THR-432 AND 450-ASP--GLY-453</scope>
    <scope>SUBCELLULAR LOCATION</scope>
    <scope>TISSUE SPECIFICITY</scope>
</reference>
<reference key="5">
    <citation type="journal article" date="2010" name="Plant Physiol.">
        <title>Assembly of an interactive correlation network for the Arabidopsis genome using a novel heuristic clustering algorithm.</title>
        <authorList>
            <person name="Mutwil M."/>
            <person name="Usadel B."/>
            <person name="Schuette M."/>
            <person name="Loraine A."/>
            <person name="Ebenhoeh O."/>
            <person name="Persson S."/>
        </authorList>
    </citation>
    <scope>DISRUPTION PHENOTYPE</scope>
</reference>
<reference key="6">
    <citation type="journal article" date="2012" name="Planta">
        <title>Arabidopsis BPG2: a phytochrome-regulated gene whose protein product binds to plastid ribosomal RNAs.</title>
        <authorList>
            <person name="Kim B.H."/>
            <person name="Malec P."/>
            <person name="Waloszek A."/>
            <person name="von Arnim A.G."/>
        </authorList>
    </citation>
    <scope>FUNCTION</scope>
    <scope>DISRUPTION PHENOTYPE</scope>
    <scope>INDUCTION BY LIGHT</scope>
    <scope>SUBCELLULAR LOCATION</scope>
    <scope>INTERACTION WITH 16S AND 23S RIBOSOMAL RNAS</scope>
    <scope>TISSUE SPECIFICITY</scope>
    <source>
        <strain>cv. Columbia</strain>
    </source>
</reference>
<comment type="function">
    <text evidence="5 6">Required for brassinosteroid- (BR) mediated post-transcriptional and translational regulation in the chloroplast, including accumulation of chloroplast rRNA (PubMed:19919572). Involved in chloroplast differentiation (PubMed:19919572, PubMed:22526496).</text>
</comment>
<comment type="subunit">
    <text evidence="6">Binds to chloroplast 16S and 23S ribosomal RNAs.</text>
</comment>
<comment type="subcellular location">
    <subcellularLocation>
        <location evidence="5 6">Plastid</location>
        <location evidence="5 6">Chloroplast stroma</location>
    </subcellularLocation>
</comment>
<comment type="tissue specificity">
    <text evidence="5 6">Mostly expressed in stems, petioles, leaves and flowers and, at low levels, also in roots.</text>
</comment>
<comment type="induction">
    <text evidence="5 6">Induced by light, but repressed by dark (PubMed:19919572, PubMed:22526496). Up-regulated by the specific inhibitor of the biosynthesis of brassinosteroids (BRs) brassinazole (Brz) (PubMed:19919572).</text>
</comment>
<comment type="disruption phenotype">
    <text evidence="4 5 6">Chlorotic dwarf mutant pale green in bpg2-1 and bpg2-2 (PubMed:19889879, PubMed:19919572, PubMed:22526496). Reduced sensitivity in the light to chlorophyll accumulation promoted by brassinazole (Brz), a specific inhibitor of the biosynthesis of brassinosteroids (BRs), via the suppression of Brz-induced chloroplast protein accumulation. Decreased number of stacked grana thylakoids in chloroplast, but more starch grains, and more and larger plastoglobules. Abnormal accumulation of precursors of chloroplast 16S and 23S rRNA (PubMed:19919572). Reduced level of chlorophyll and carotenoid pigmentation in plastids leading to defective photosystem II and altered photosystem I functions (PubMed:22526496).</text>
</comment>
<comment type="similarity">
    <text evidence="2">Belongs to the TRAFAC class YlqF/YawG GTPase family.</text>
</comment>
<comment type="sequence caution" evidence="8">
    <conflict type="erroneous gene model prediction">
        <sequence resource="EMBL-CDS" id="CAB68124"/>
    </conflict>
</comment>
<protein>
    <recommendedName>
        <fullName evidence="7">GTP-binding protein BRASSINAZOLE INSENSITIVE PALE GREEN 2, chloroplastic</fullName>
        <shortName evidence="7">Protein BRZ-INSENSITIVE-PALE GREEN 2</shortName>
    </recommendedName>
</protein>
<proteinExistence type="evidence at protein level"/>
<dbReference type="EMBL" id="AL137080">
    <property type="protein sequence ID" value="CAB68124.1"/>
    <property type="status" value="ALT_SEQ"/>
    <property type="molecule type" value="Genomic_DNA"/>
</dbReference>
<dbReference type="EMBL" id="CP002686">
    <property type="protein sequence ID" value="AEE79624.2"/>
    <property type="molecule type" value="Genomic_DNA"/>
</dbReference>
<dbReference type="EMBL" id="AY062540">
    <property type="protein sequence ID" value="AAL32618.1"/>
    <property type="molecule type" value="mRNA"/>
</dbReference>
<dbReference type="EMBL" id="BT003368">
    <property type="protein sequence ID" value="AAO29986.1"/>
    <property type="molecule type" value="mRNA"/>
</dbReference>
<dbReference type="PIR" id="T45796">
    <property type="entry name" value="T45796"/>
</dbReference>
<dbReference type="RefSeq" id="NP_191277.5">
    <property type="nucleotide sequence ID" value="NM_115578.5"/>
</dbReference>
<dbReference type="SMR" id="Q8W4I6"/>
<dbReference type="FunCoup" id="Q8W4I6">
    <property type="interactions" value="2665"/>
</dbReference>
<dbReference type="STRING" id="3702.Q8W4I6"/>
<dbReference type="PaxDb" id="3702-AT3G57180.1"/>
<dbReference type="ProteomicsDB" id="240736"/>
<dbReference type="DNASU" id="824885"/>
<dbReference type="GeneID" id="824885"/>
<dbReference type="KEGG" id="ath:AT3G57180"/>
<dbReference type="Araport" id="AT3G57180"/>
<dbReference type="TAIR" id="AT3G57180"/>
<dbReference type="eggNOG" id="KOG1249">
    <property type="taxonomic scope" value="Eukaryota"/>
</dbReference>
<dbReference type="HOGENOM" id="CLU_415977_0_0_1"/>
<dbReference type="InParanoid" id="Q8W4I6"/>
<dbReference type="PRO" id="PR:Q8W4I6"/>
<dbReference type="Proteomes" id="UP000006548">
    <property type="component" value="Chromosome 3"/>
</dbReference>
<dbReference type="ExpressionAtlas" id="Q8W4I6">
    <property type="expression patterns" value="baseline and differential"/>
</dbReference>
<dbReference type="GO" id="GO:0009507">
    <property type="term" value="C:chloroplast"/>
    <property type="evidence" value="ECO:0000314"/>
    <property type="project" value="UniProtKB"/>
</dbReference>
<dbReference type="GO" id="GO:0009570">
    <property type="term" value="C:chloroplast stroma"/>
    <property type="evidence" value="ECO:0000314"/>
    <property type="project" value="UniProtKB"/>
</dbReference>
<dbReference type="GO" id="GO:0005739">
    <property type="term" value="C:mitochondrion"/>
    <property type="evidence" value="ECO:0000318"/>
    <property type="project" value="GO_Central"/>
</dbReference>
<dbReference type="GO" id="GO:0005525">
    <property type="term" value="F:GTP binding"/>
    <property type="evidence" value="ECO:0007669"/>
    <property type="project" value="UniProtKB-KW"/>
</dbReference>
<dbReference type="GO" id="GO:0016787">
    <property type="term" value="F:hydrolase activity"/>
    <property type="evidence" value="ECO:0007669"/>
    <property type="project" value="UniProtKB-KW"/>
</dbReference>
<dbReference type="GO" id="GO:0003729">
    <property type="term" value="F:mRNA binding"/>
    <property type="evidence" value="ECO:0000314"/>
    <property type="project" value="TAIR"/>
</dbReference>
<dbReference type="GO" id="GO:0019843">
    <property type="term" value="F:rRNA binding"/>
    <property type="evidence" value="ECO:0000314"/>
    <property type="project" value="UniProtKB"/>
</dbReference>
<dbReference type="GO" id="GO:0009742">
    <property type="term" value="P:brassinosteroid mediated signaling pathway"/>
    <property type="evidence" value="ECO:0000315"/>
    <property type="project" value="UniProtKB"/>
</dbReference>
<dbReference type="GO" id="GO:0009658">
    <property type="term" value="P:chloroplast organization"/>
    <property type="evidence" value="ECO:0000315"/>
    <property type="project" value="UniProtKB"/>
</dbReference>
<dbReference type="GO" id="GO:1901259">
    <property type="term" value="P:chloroplast rRNA processing"/>
    <property type="evidence" value="ECO:0000315"/>
    <property type="project" value="UniProtKB"/>
</dbReference>
<dbReference type="GO" id="GO:0032502">
    <property type="term" value="P:developmental process"/>
    <property type="evidence" value="ECO:0000315"/>
    <property type="project" value="TAIR"/>
</dbReference>
<dbReference type="GO" id="GO:1904143">
    <property type="term" value="P:positive regulation of carotenoid biosynthetic process"/>
    <property type="evidence" value="ECO:0000315"/>
    <property type="project" value="UniProtKB"/>
</dbReference>
<dbReference type="GO" id="GO:1902326">
    <property type="term" value="P:positive regulation of chlorophyll biosynthetic process"/>
    <property type="evidence" value="ECO:0000315"/>
    <property type="project" value="UniProtKB"/>
</dbReference>
<dbReference type="GO" id="GO:0006355">
    <property type="term" value="P:regulation of DNA-templated transcription"/>
    <property type="evidence" value="ECO:0000315"/>
    <property type="project" value="UniProtKB"/>
</dbReference>
<dbReference type="GO" id="GO:0009646">
    <property type="term" value="P:response to absence of light"/>
    <property type="evidence" value="ECO:0000270"/>
    <property type="project" value="UniProtKB"/>
</dbReference>
<dbReference type="GO" id="GO:0009741">
    <property type="term" value="P:response to brassinosteroid"/>
    <property type="evidence" value="ECO:0000270"/>
    <property type="project" value="UniProtKB"/>
</dbReference>
<dbReference type="GO" id="GO:0009416">
    <property type="term" value="P:response to light stimulus"/>
    <property type="evidence" value="ECO:0000270"/>
    <property type="project" value="UniProtKB"/>
</dbReference>
<dbReference type="GO" id="GO:0009651">
    <property type="term" value="P:response to salt stress"/>
    <property type="evidence" value="ECO:0000315"/>
    <property type="project" value="TAIR"/>
</dbReference>
<dbReference type="CDD" id="cd01855">
    <property type="entry name" value="YqeH"/>
    <property type="match status" value="1"/>
</dbReference>
<dbReference type="FunFam" id="3.40.50.300:FF:001582">
    <property type="entry name" value="GTP-binding protein BRASSINAZOLE INSENSITIVE PALE GREEN 2, chloroplastic"/>
    <property type="match status" value="1"/>
</dbReference>
<dbReference type="Gene3D" id="3.40.50.300">
    <property type="entry name" value="P-loop containing nucleotide triphosphate hydrolases"/>
    <property type="match status" value="1"/>
</dbReference>
<dbReference type="InterPro" id="IPR030378">
    <property type="entry name" value="G_CP_dom"/>
</dbReference>
<dbReference type="InterPro" id="IPR006073">
    <property type="entry name" value="GTP-bd"/>
</dbReference>
<dbReference type="InterPro" id="IPR050896">
    <property type="entry name" value="Mito_lipid_metab_GTPase"/>
</dbReference>
<dbReference type="InterPro" id="IPR048422">
    <property type="entry name" value="NOA1/YqeH-like_C"/>
</dbReference>
<dbReference type="InterPro" id="IPR027417">
    <property type="entry name" value="P-loop_NTPase"/>
</dbReference>
<dbReference type="PANTHER" id="PTHR46434">
    <property type="entry name" value="GENETIC INTERACTOR OF PROHIBITINS 3, MITOCHONDRIAL"/>
    <property type="match status" value="1"/>
</dbReference>
<dbReference type="PANTHER" id="PTHR46434:SF3">
    <property type="entry name" value="GTP-BINDING PROTEIN BRASSINAZOLE INSENSITIVE PALE GREEN 2, CHLOROPLASTIC"/>
    <property type="match status" value="1"/>
</dbReference>
<dbReference type="Pfam" id="PF01926">
    <property type="entry name" value="MMR_HSR1"/>
    <property type="match status" value="1"/>
</dbReference>
<dbReference type="Pfam" id="PF21516">
    <property type="entry name" value="YqeH-like_C"/>
    <property type="match status" value="1"/>
</dbReference>
<dbReference type="SUPFAM" id="SSF52540">
    <property type="entry name" value="P-loop containing nucleoside triphosphate hydrolases"/>
    <property type="match status" value="1"/>
</dbReference>
<dbReference type="PROSITE" id="PS51721">
    <property type="entry name" value="G_CP"/>
    <property type="match status" value="1"/>
</dbReference>
<evidence type="ECO:0000255" key="1"/>
<evidence type="ECO:0000255" key="2">
    <source>
        <dbReference type="PROSITE-ProRule" id="PRU01058"/>
    </source>
</evidence>
<evidence type="ECO:0000256" key="3">
    <source>
        <dbReference type="SAM" id="MobiDB-lite"/>
    </source>
</evidence>
<evidence type="ECO:0000269" key="4">
    <source>
    </source>
</evidence>
<evidence type="ECO:0000269" key="5">
    <source>
    </source>
</evidence>
<evidence type="ECO:0000269" key="6">
    <source>
    </source>
</evidence>
<evidence type="ECO:0000303" key="7">
    <source>
    </source>
</evidence>
<evidence type="ECO:0000305" key="8"/>
<evidence type="ECO:0000312" key="9">
    <source>
        <dbReference type="Araport" id="AT3G57180"/>
    </source>
</evidence>
<evidence type="ECO:0000312" key="10">
    <source>
        <dbReference type="EMBL" id="CAB68124.1"/>
    </source>
</evidence>
<sequence>MVVLISSTVTICNVKPKLEDGNFRVSRLIHRPEVPFFSGLSNEKKKKCAVSVMCLAVKKEQVVQSVESVNGTIFPKKSKNLIMSEGRDEDEDYGKIICPGCGIFMQDNDPDLPGYYQKRKVIANNLEGDEHVENDELAGFEMVDDDADEEEEGEDDEMDDEIKNAIEGSNSESESGFEWESDEWEEKKEVNDVELDGFAPAGVGYGNVTEEKEKKKRVSKTERKKIAREEAKKDNYDDVTVCARCHSLRNYGQVKNQAAENLLPDFDFDRLISTRLIKPMSNSSTTVVVMVVDCVDFDGSFPKRAAKSLFQVLQKAENDPKGSKNLPKLVLVATKVDLLPTQISPARLDRWVRHRAKAGGAPKLSGVYMVSARKDIGVKNLLAYIKELAGPRGNVWVIGAQNAGKSTLINALSKKDGAKVTRLTEAPVPGTTLGILKIGGILSAKAKMYDTPGLLHPYLMSLRLNSEERKMVEIRKEVQPRSYRVKAGQSVHIGGLVRLDLVSASVETIYITIWASHSVSLHLGKTENAEEIFKGHSGLRLQPPIGENRASELGTWEEKEIQVSGNSWDVKSIDISVAGLGWLSLGLKGAATLALWTYQGIDVTLREPLVIDRAPYLERPGFWLPKAITEVLGTHSSKLVDARRRKKQQDSTDFLSDSVA</sequence>
<feature type="transit peptide" description="Chloroplast" evidence="1">
    <location>
        <begin position="1"/>
        <end position="53"/>
    </location>
</feature>
<feature type="chain" id="PRO_0000435523" description="GTP-binding protein BRASSINAZOLE INSENSITIVE PALE GREEN 2, chloroplastic">
    <location>
        <begin position="54"/>
        <end position="660"/>
    </location>
</feature>
<feature type="domain" description="CP-type G" evidence="2">
    <location>
        <begin position="273"/>
        <end position="457"/>
    </location>
</feature>
<feature type="region of interest" description="Disordered" evidence="3">
    <location>
        <begin position="127"/>
        <end position="158"/>
    </location>
</feature>
<feature type="region of interest" description="Disordered" evidence="3">
    <location>
        <begin position="191"/>
        <end position="212"/>
    </location>
</feature>
<feature type="compositionally biased region" description="Acidic residues" evidence="3">
    <location>
        <begin position="130"/>
        <end position="158"/>
    </location>
</feature>
<feature type="mutagenesis site" description="Pale green and unable to complement the bpg2-1 mutant." evidence="5">
    <original>CPGCG</original>
    <variation>APAAA</variation>
    <location>
        <begin position="98"/>
        <end position="102"/>
    </location>
</feature>
<feature type="mutagenesis site" description="Pale green and unable to complement the bpg2-1 mutant." evidence="5">
    <original>CARC</original>
    <variation>AAAA</variation>
    <location>
        <begin position="242"/>
        <end position="245"/>
    </location>
</feature>
<feature type="mutagenesis site" description="Pale green and unable to complement the bpg2-1 mutant." evidence="5">
    <original>KVD</original>
    <variation>AVA</variation>
    <location>
        <begin position="335"/>
        <end position="337"/>
    </location>
</feature>
<feature type="mutagenesis site" description="Pale green and unable to complement the bpg2-1 mutant." evidence="5">
    <original>GK</original>
    <variation>AA</variation>
    <location>
        <begin position="404"/>
        <end position="405"/>
    </location>
</feature>
<feature type="mutagenesis site" description="Pale green and unable to complement the bpg2-1 mutant." evidence="5">
    <original>TT</original>
    <variation>AA</variation>
    <location>
        <begin position="431"/>
        <end position="432"/>
    </location>
</feature>
<feature type="mutagenesis site" description="Pale green and unable to complement the bpg2-1 mutant." evidence="5">
    <original>DTPG</original>
    <variation>ATPA</variation>
    <location>
        <begin position="450"/>
        <end position="453"/>
    </location>
</feature>